<organism>
    <name type="scientific">Geobacillus kaustophilus (strain HTA426)</name>
    <dbReference type="NCBI Taxonomy" id="235909"/>
    <lineage>
        <taxon>Bacteria</taxon>
        <taxon>Bacillati</taxon>
        <taxon>Bacillota</taxon>
        <taxon>Bacilli</taxon>
        <taxon>Bacillales</taxon>
        <taxon>Anoxybacillaceae</taxon>
        <taxon>Geobacillus</taxon>
        <taxon>Geobacillus thermoleovorans group</taxon>
    </lineage>
</organism>
<comment type="function">
    <text evidence="1">Catalyzes the phosphorylation of the 3'-hydroxyl group of dephosphocoenzyme A to form coenzyme A.</text>
</comment>
<comment type="catalytic activity">
    <reaction evidence="1">
        <text>3'-dephospho-CoA + ATP = ADP + CoA + H(+)</text>
        <dbReference type="Rhea" id="RHEA:18245"/>
        <dbReference type="ChEBI" id="CHEBI:15378"/>
        <dbReference type="ChEBI" id="CHEBI:30616"/>
        <dbReference type="ChEBI" id="CHEBI:57287"/>
        <dbReference type="ChEBI" id="CHEBI:57328"/>
        <dbReference type="ChEBI" id="CHEBI:456216"/>
        <dbReference type="EC" id="2.7.1.24"/>
    </reaction>
</comment>
<comment type="pathway">
    <text evidence="1">Cofactor biosynthesis; coenzyme A biosynthesis; CoA from (R)-pantothenate: step 5/5.</text>
</comment>
<comment type="subcellular location">
    <subcellularLocation>
        <location evidence="1">Cytoplasm</location>
    </subcellularLocation>
</comment>
<comment type="similarity">
    <text evidence="1">Belongs to the CoaE family.</text>
</comment>
<protein>
    <recommendedName>
        <fullName evidence="1">Dephospho-CoA kinase</fullName>
        <ecNumber evidence="1">2.7.1.24</ecNumber>
    </recommendedName>
    <alternativeName>
        <fullName evidence="1">Dephosphocoenzyme A kinase</fullName>
    </alternativeName>
</protein>
<reference key="1">
    <citation type="journal article" date="2004" name="Nucleic Acids Res.">
        <title>Thermoadaptation trait revealed by the genome sequence of thermophilic Geobacillus kaustophilus.</title>
        <authorList>
            <person name="Takami H."/>
            <person name="Takaki Y."/>
            <person name="Chee G.-J."/>
            <person name="Nishi S."/>
            <person name="Shimamura S."/>
            <person name="Suzuki H."/>
            <person name="Matsui S."/>
            <person name="Uchiyama I."/>
        </authorList>
    </citation>
    <scope>NUCLEOTIDE SEQUENCE [LARGE SCALE GENOMIC DNA]</scope>
    <source>
        <strain>HTA426</strain>
    </source>
</reference>
<sequence>MTLTIGLTGGIASGKSTVSAMMRELGLPVIDADEAARAVVRPGEDAYRQIVAAFGPGILQTNGEIDRAKLGAIVFNNEEERKKLNAIVHPAVRQKMLAEKEALVRSGTKTVVLDIPLLFESGLTSWVDKVLVVYVDDDIQLRRLMERNGFTEEEARARICAQWPLAEKMKRADAVINNNGTREETRRQLLAILKQWDALEK</sequence>
<proteinExistence type="inferred from homology"/>
<keyword id="KW-0067">ATP-binding</keyword>
<keyword id="KW-0173">Coenzyme A biosynthesis</keyword>
<keyword id="KW-0963">Cytoplasm</keyword>
<keyword id="KW-0418">Kinase</keyword>
<keyword id="KW-0547">Nucleotide-binding</keyword>
<keyword id="KW-1185">Reference proteome</keyword>
<keyword id="KW-0808">Transferase</keyword>
<accession>Q5KWC4</accession>
<dbReference type="EC" id="2.7.1.24" evidence="1"/>
<dbReference type="EMBL" id="BA000043">
    <property type="protein sequence ID" value="BAD77012.1"/>
    <property type="molecule type" value="Genomic_DNA"/>
</dbReference>
<dbReference type="RefSeq" id="WP_011232201.1">
    <property type="nucleotide sequence ID" value="NC_006510.1"/>
</dbReference>
<dbReference type="SMR" id="Q5KWC4"/>
<dbReference type="STRING" id="235909.GK2727"/>
<dbReference type="KEGG" id="gka:GK2727"/>
<dbReference type="PATRIC" id="fig|235909.7.peg.2911"/>
<dbReference type="eggNOG" id="COG0237">
    <property type="taxonomic scope" value="Bacteria"/>
</dbReference>
<dbReference type="HOGENOM" id="CLU_057180_0_0_9"/>
<dbReference type="UniPathway" id="UPA00241">
    <property type="reaction ID" value="UER00356"/>
</dbReference>
<dbReference type="Proteomes" id="UP000001172">
    <property type="component" value="Chromosome"/>
</dbReference>
<dbReference type="GO" id="GO:0005737">
    <property type="term" value="C:cytoplasm"/>
    <property type="evidence" value="ECO:0007669"/>
    <property type="project" value="UniProtKB-SubCell"/>
</dbReference>
<dbReference type="GO" id="GO:0005524">
    <property type="term" value="F:ATP binding"/>
    <property type="evidence" value="ECO:0007669"/>
    <property type="project" value="UniProtKB-UniRule"/>
</dbReference>
<dbReference type="GO" id="GO:0004140">
    <property type="term" value="F:dephospho-CoA kinase activity"/>
    <property type="evidence" value="ECO:0007669"/>
    <property type="project" value="UniProtKB-UniRule"/>
</dbReference>
<dbReference type="GO" id="GO:0015937">
    <property type="term" value="P:coenzyme A biosynthetic process"/>
    <property type="evidence" value="ECO:0007669"/>
    <property type="project" value="UniProtKB-UniRule"/>
</dbReference>
<dbReference type="CDD" id="cd02022">
    <property type="entry name" value="DPCK"/>
    <property type="match status" value="1"/>
</dbReference>
<dbReference type="FunFam" id="3.40.50.300:FF:000485">
    <property type="entry name" value="Dephospho-CoA kinase CAB5"/>
    <property type="match status" value="1"/>
</dbReference>
<dbReference type="Gene3D" id="3.40.50.300">
    <property type="entry name" value="P-loop containing nucleotide triphosphate hydrolases"/>
    <property type="match status" value="1"/>
</dbReference>
<dbReference type="HAMAP" id="MF_00376">
    <property type="entry name" value="Dephospho_CoA_kinase"/>
    <property type="match status" value="1"/>
</dbReference>
<dbReference type="InterPro" id="IPR001977">
    <property type="entry name" value="Depp_CoAkinase"/>
</dbReference>
<dbReference type="InterPro" id="IPR027417">
    <property type="entry name" value="P-loop_NTPase"/>
</dbReference>
<dbReference type="NCBIfam" id="TIGR00152">
    <property type="entry name" value="dephospho-CoA kinase"/>
    <property type="match status" value="1"/>
</dbReference>
<dbReference type="PANTHER" id="PTHR10695:SF46">
    <property type="entry name" value="BIFUNCTIONAL COENZYME A SYNTHASE-RELATED"/>
    <property type="match status" value="1"/>
</dbReference>
<dbReference type="PANTHER" id="PTHR10695">
    <property type="entry name" value="DEPHOSPHO-COA KINASE-RELATED"/>
    <property type="match status" value="1"/>
</dbReference>
<dbReference type="Pfam" id="PF01121">
    <property type="entry name" value="CoaE"/>
    <property type="match status" value="1"/>
</dbReference>
<dbReference type="SUPFAM" id="SSF52540">
    <property type="entry name" value="P-loop containing nucleoside triphosphate hydrolases"/>
    <property type="match status" value="1"/>
</dbReference>
<dbReference type="PROSITE" id="PS51219">
    <property type="entry name" value="DPCK"/>
    <property type="match status" value="1"/>
</dbReference>
<evidence type="ECO:0000255" key="1">
    <source>
        <dbReference type="HAMAP-Rule" id="MF_00376"/>
    </source>
</evidence>
<feature type="chain" id="PRO_0000243290" description="Dephospho-CoA kinase">
    <location>
        <begin position="1"/>
        <end position="201"/>
    </location>
</feature>
<feature type="domain" description="DPCK" evidence="1">
    <location>
        <begin position="4"/>
        <end position="201"/>
    </location>
</feature>
<feature type="binding site" evidence="1">
    <location>
        <begin position="12"/>
        <end position="17"/>
    </location>
    <ligand>
        <name>ATP</name>
        <dbReference type="ChEBI" id="CHEBI:30616"/>
    </ligand>
</feature>
<name>COAE_GEOKA</name>
<gene>
    <name evidence="1" type="primary">coaE</name>
    <name type="ordered locus">GK2727</name>
</gene>